<sequence length="131" mass="14797">MTDPIADYLTRLRNAIMAGHRVVSVPASNIKKEITKILFDKGYILNYKFEENDSQGIIKVALKYDLAHKVNAIKKLKRVSRPGLRKYVGYRDMPRVLNGLGIAIVSTPRGVMTDKEARELKVGGEVLCYVY</sequence>
<comment type="function">
    <text evidence="1">One of the primary rRNA binding proteins, it binds directly to 16S rRNA central domain where it helps coordinate assembly of the platform of the 30S subunit.</text>
</comment>
<comment type="subunit">
    <text evidence="1">Part of the 30S ribosomal subunit. Contacts proteins S5 and S12.</text>
</comment>
<comment type="similarity">
    <text evidence="1">Belongs to the universal ribosomal protein uS8 family.</text>
</comment>
<proteinExistence type="inferred from homology"/>
<gene>
    <name evidence="1" type="primary">rpsH</name>
    <name type="ordered locus">PGN_1854</name>
</gene>
<name>RS8_PORG3</name>
<protein>
    <recommendedName>
        <fullName evidence="1">Small ribosomal subunit protein uS8</fullName>
    </recommendedName>
    <alternativeName>
        <fullName evidence="2">30S ribosomal protein S8</fullName>
    </alternativeName>
</protein>
<organism>
    <name type="scientific">Porphyromonas gingivalis (strain ATCC 33277 / DSM 20709 / CIP 103683 / JCM 12257 / NCTC 11834 / 2561)</name>
    <dbReference type="NCBI Taxonomy" id="431947"/>
    <lineage>
        <taxon>Bacteria</taxon>
        <taxon>Pseudomonadati</taxon>
        <taxon>Bacteroidota</taxon>
        <taxon>Bacteroidia</taxon>
        <taxon>Bacteroidales</taxon>
        <taxon>Porphyromonadaceae</taxon>
        <taxon>Porphyromonas</taxon>
    </lineage>
</organism>
<accession>B2RLX8</accession>
<dbReference type="EMBL" id="AP009380">
    <property type="protein sequence ID" value="BAG34373.1"/>
    <property type="molecule type" value="Genomic_DNA"/>
</dbReference>
<dbReference type="RefSeq" id="WP_010956444.1">
    <property type="nucleotide sequence ID" value="NZ_CP025930.1"/>
</dbReference>
<dbReference type="SMR" id="B2RLX8"/>
<dbReference type="GeneID" id="57239582"/>
<dbReference type="KEGG" id="pgn:PGN_1854"/>
<dbReference type="eggNOG" id="COG0096">
    <property type="taxonomic scope" value="Bacteria"/>
</dbReference>
<dbReference type="HOGENOM" id="CLU_098428_0_2_10"/>
<dbReference type="OrthoDB" id="9802617at2"/>
<dbReference type="BioCyc" id="PGIN431947:G1G2V-2068-MONOMER"/>
<dbReference type="Proteomes" id="UP000008842">
    <property type="component" value="Chromosome"/>
</dbReference>
<dbReference type="GO" id="GO:1990904">
    <property type="term" value="C:ribonucleoprotein complex"/>
    <property type="evidence" value="ECO:0007669"/>
    <property type="project" value="UniProtKB-KW"/>
</dbReference>
<dbReference type="GO" id="GO:0005840">
    <property type="term" value="C:ribosome"/>
    <property type="evidence" value="ECO:0007669"/>
    <property type="project" value="UniProtKB-KW"/>
</dbReference>
<dbReference type="GO" id="GO:0019843">
    <property type="term" value="F:rRNA binding"/>
    <property type="evidence" value="ECO:0007669"/>
    <property type="project" value="UniProtKB-UniRule"/>
</dbReference>
<dbReference type="GO" id="GO:0003735">
    <property type="term" value="F:structural constituent of ribosome"/>
    <property type="evidence" value="ECO:0007669"/>
    <property type="project" value="InterPro"/>
</dbReference>
<dbReference type="GO" id="GO:0006412">
    <property type="term" value="P:translation"/>
    <property type="evidence" value="ECO:0007669"/>
    <property type="project" value="UniProtKB-UniRule"/>
</dbReference>
<dbReference type="FunFam" id="3.30.1370.30:FF:000002">
    <property type="entry name" value="30S ribosomal protein S8"/>
    <property type="match status" value="1"/>
</dbReference>
<dbReference type="FunFam" id="3.30.1490.10:FF:000001">
    <property type="entry name" value="30S ribosomal protein S8"/>
    <property type="match status" value="1"/>
</dbReference>
<dbReference type="Gene3D" id="3.30.1370.30">
    <property type="match status" value="1"/>
</dbReference>
<dbReference type="Gene3D" id="3.30.1490.10">
    <property type="match status" value="1"/>
</dbReference>
<dbReference type="HAMAP" id="MF_01302_B">
    <property type="entry name" value="Ribosomal_uS8_B"/>
    <property type="match status" value="1"/>
</dbReference>
<dbReference type="InterPro" id="IPR000630">
    <property type="entry name" value="Ribosomal_uS8"/>
</dbReference>
<dbReference type="InterPro" id="IPR047863">
    <property type="entry name" value="Ribosomal_uS8_CS"/>
</dbReference>
<dbReference type="InterPro" id="IPR035987">
    <property type="entry name" value="Ribosomal_uS8_sf"/>
</dbReference>
<dbReference type="NCBIfam" id="NF001109">
    <property type="entry name" value="PRK00136.1"/>
    <property type="match status" value="1"/>
</dbReference>
<dbReference type="PANTHER" id="PTHR11758">
    <property type="entry name" value="40S RIBOSOMAL PROTEIN S15A"/>
    <property type="match status" value="1"/>
</dbReference>
<dbReference type="Pfam" id="PF00410">
    <property type="entry name" value="Ribosomal_S8"/>
    <property type="match status" value="1"/>
</dbReference>
<dbReference type="SUPFAM" id="SSF56047">
    <property type="entry name" value="Ribosomal protein S8"/>
    <property type="match status" value="1"/>
</dbReference>
<dbReference type="PROSITE" id="PS00053">
    <property type="entry name" value="RIBOSOMAL_S8"/>
    <property type="match status" value="1"/>
</dbReference>
<reference key="1">
    <citation type="journal article" date="2008" name="DNA Res.">
        <title>Determination of the genome sequence of Porphyromonas gingivalis strain ATCC 33277 and genomic comparison with strain W83 revealed extensive genome rearrangements in P. gingivalis.</title>
        <authorList>
            <person name="Naito M."/>
            <person name="Hirakawa H."/>
            <person name="Yamashita A."/>
            <person name="Ohara N."/>
            <person name="Shoji M."/>
            <person name="Yukitake H."/>
            <person name="Nakayama K."/>
            <person name="Toh H."/>
            <person name="Yoshimura F."/>
            <person name="Kuhara S."/>
            <person name="Hattori M."/>
            <person name="Hayashi T."/>
            <person name="Nakayama K."/>
        </authorList>
    </citation>
    <scope>NUCLEOTIDE SEQUENCE [LARGE SCALE GENOMIC DNA]</scope>
    <source>
        <strain>ATCC 33277 / DSM 20709 / CIP 103683 / JCM 12257 / NCTC 11834 / 2561</strain>
    </source>
</reference>
<keyword id="KW-0687">Ribonucleoprotein</keyword>
<keyword id="KW-0689">Ribosomal protein</keyword>
<keyword id="KW-0694">RNA-binding</keyword>
<keyword id="KW-0699">rRNA-binding</keyword>
<feature type="chain" id="PRO_1000140593" description="Small ribosomal subunit protein uS8">
    <location>
        <begin position="1"/>
        <end position="131"/>
    </location>
</feature>
<evidence type="ECO:0000255" key="1">
    <source>
        <dbReference type="HAMAP-Rule" id="MF_01302"/>
    </source>
</evidence>
<evidence type="ECO:0000305" key="2"/>